<name>069R_FRG3G</name>
<dbReference type="EMBL" id="AY548484">
    <property type="protein sequence ID" value="AAT09729.1"/>
    <property type="molecule type" value="Genomic_DNA"/>
</dbReference>
<dbReference type="RefSeq" id="YP_031648.1">
    <property type="nucleotide sequence ID" value="NC_005946.1"/>
</dbReference>
<dbReference type="KEGG" id="vg:2947769"/>
<dbReference type="Proteomes" id="UP000008770">
    <property type="component" value="Segment"/>
</dbReference>
<dbReference type="GO" id="GO:0033644">
    <property type="term" value="C:host cell membrane"/>
    <property type="evidence" value="ECO:0007669"/>
    <property type="project" value="UniProtKB-SubCell"/>
</dbReference>
<dbReference type="GO" id="GO:0016020">
    <property type="term" value="C:membrane"/>
    <property type="evidence" value="ECO:0007669"/>
    <property type="project" value="UniProtKB-KW"/>
</dbReference>
<gene>
    <name type="ORF">FV3-069R</name>
</gene>
<reference key="1">
    <citation type="journal article" date="2004" name="Virology">
        <title>Comparative genomic analyses of frog virus 3, type species of the genus Ranavirus (family Iridoviridae).</title>
        <authorList>
            <person name="Tan W.G."/>
            <person name="Barkman T.J."/>
            <person name="Gregory Chinchar V."/>
            <person name="Essani K."/>
        </authorList>
    </citation>
    <scope>NUCLEOTIDE SEQUENCE [LARGE SCALE GENOMIC DNA]</scope>
</reference>
<organism>
    <name type="scientific">Frog virus 3 (isolate Goorha)</name>
    <name type="common">FV-3</name>
    <dbReference type="NCBI Taxonomy" id="654924"/>
    <lineage>
        <taxon>Viruses</taxon>
        <taxon>Varidnaviria</taxon>
        <taxon>Bamfordvirae</taxon>
        <taxon>Nucleocytoviricota</taxon>
        <taxon>Megaviricetes</taxon>
        <taxon>Pimascovirales</taxon>
        <taxon>Iridoviridae</taxon>
        <taxon>Alphairidovirinae</taxon>
        <taxon>Ranavirus</taxon>
        <taxon>Frog virus 3</taxon>
    </lineage>
</organism>
<organismHost>
    <name type="scientific">Dryophytes versicolor</name>
    <name type="common">chameleon treefrog</name>
    <dbReference type="NCBI Taxonomy" id="30343"/>
</organismHost>
<organismHost>
    <name type="scientific">Lithobates pipiens</name>
    <name type="common">Northern leopard frog</name>
    <name type="synonym">Rana pipiens</name>
    <dbReference type="NCBI Taxonomy" id="8404"/>
</organismHost>
<organismHost>
    <name type="scientific">Lithobates sylvaticus</name>
    <name type="common">Wood frog</name>
    <name type="synonym">Rana sylvatica</name>
    <dbReference type="NCBI Taxonomy" id="45438"/>
</organismHost>
<organismHost>
    <name type="scientific">Notophthalmus viridescens</name>
    <name type="common">Eastern newt</name>
    <name type="synonym">Triturus viridescens</name>
    <dbReference type="NCBI Taxonomy" id="8316"/>
</organismHost>
<protein>
    <recommendedName>
        <fullName>Transmembrane protein 069R</fullName>
    </recommendedName>
</protein>
<evidence type="ECO:0000255" key="1"/>
<evidence type="ECO:0000305" key="2"/>
<sequence>MERSATLEMLNVHKPDARQTGDILSRYANALWPPALAYAASVAAGYVFTAGPHGCRCGKAMTEAARVGVFLGVLCALYNWMGSGDSFA</sequence>
<proteinExistence type="predicted"/>
<accession>Q6GZQ6</accession>
<keyword id="KW-1043">Host membrane</keyword>
<keyword id="KW-0472">Membrane</keyword>
<keyword id="KW-1185">Reference proteome</keyword>
<keyword id="KW-0812">Transmembrane</keyword>
<keyword id="KW-1133">Transmembrane helix</keyword>
<comment type="subcellular location">
    <subcellularLocation>
        <location evidence="2">Host membrane</location>
        <topology evidence="2">Multi-pass membrane protein</topology>
    </subcellularLocation>
</comment>
<feature type="chain" id="PRO_0000410525" description="Transmembrane protein 069R">
    <location>
        <begin position="1"/>
        <end position="88"/>
    </location>
</feature>
<feature type="transmembrane region" description="Helical" evidence="1">
    <location>
        <begin position="30"/>
        <end position="50"/>
    </location>
</feature>
<feature type="transmembrane region" description="Helical" evidence="1">
    <location>
        <begin position="67"/>
        <end position="87"/>
    </location>
</feature>